<evidence type="ECO:0000255" key="1">
    <source>
        <dbReference type="HAMAP-Rule" id="MF_00532"/>
    </source>
</evidence>
<evidence type="ECO:0000305" key="2"/>
<gene>
    <name evidence="1" type="primary">rpsI</name>
    <name type="ordered locus">Sde_3163</name>
</gene>
<protein>
    <recommendedName>
        <fullName evidence="1">Small ribosomal subunit protein uS9</fullName>
    </recommendedName>
    <alternativeName>
        <fullName evidence="2">30S ribosomal protein S9</fullName>
    </alternativeName>
</protein>
<organism>
    <name type="scientific">Saccharophagus degradans (strain 2-40 / ATCC 43961 / DSM 17024)</name>
    <dbReference type="NCBI Taxonomy" id="203122"/>
    <lineage>
        <taxon>Bacteria</taxon>
        <taxon>Pseudomonadati</taxon>
        <taxon>Pseudomonadota</taxon>
        <taxon>Gammaproteobacteria</taxon>
        <taxon>Cellvibrionales</taxon>
        <taxon>Cellvibrionaceae</taxon>
        <taxon>Saccharophagus</taxon>
    </lineage>
</organism>
<dbReference type="EMBL" id="CP000282">
    <property type="protein sequence ID" value="ABD82420.1"/>
    <property type="molecule type" value="Genomic_DNA"/>
</dbReference>
<dbReference type="RefSeq" id="WP_011469636.1">
    <property type="nucleotide sequence ID" value="NC_007912.1"/>
</dbReference>
<dbReference type="SMR" id="Q21FV9"/>
<dbReference type="STRING" id="203122.Sde_3163"/>
<dbReference type="GeneID" id="98614790"/>
<dbReference type="KEGG" id="sde:Sde_3163"/>
<dbReference type="eggNOG" id="COG0103">
    <property type="taxonomic scope" value="Bacteria"/>
</dbReference>
<dbReference type="HOGENOM" id="CLU_046483_2_1_6"/>
<dbReference type="OrthoDB" id="9803965at2"/>
<dbReference type="Proteomes" id="UP000001947">
    <property type="component" value="Chromosome"/>
</dbReference>
<dbReference type="GO" id="GO:0022627">
    <property type="term" value="C:cytosolic small ribosomal subunit"/>
    <property type="evidence" value="ECO:0007669"/>
    <property type="project" value="TreeGrafter"/>
</dbReference>
<dbReference type="GO" id="GO:0003723">
    <property type="term" value="F:RNA binding"/>
    <property type="evidence" value="ECO:0007669"/>
    <property type="project" value="TreeGrafter"/>
</dbReference>
<dbReference type="GO" id="GO:0003735">
    <property type="term" value="F:structural constituent of ribosome"/>
    <property type="evidence" value="ECO:0007669"/>
    <property type="project" value="InterPro"/>
</dbReference>
<dbReference type="GO" id="GO:0006412">
    <property type="term" value="P:translation"/>
    <property type="evidence" value="ECO:0007669"/>
    <property type="project" value="UniProtKB-UniRule"/>
</dbReference>
<dbReference type="FunFam" id="3.30.230.10:FF:000001">
    <property type="entry name" value="30S ribosomal protein S9"/>
    <property type="match status" value="1"/>
</dbReference>
<dbReference type="Gene3D" id="3.30.230.10">
    <property type="match status" value="1"/>
</dbReference>
<dbReference type="HAMAP" id="MF_00532_B">
    <property type="entry name" value="Ribosomal_uS9_B"/>
    <property type="match status" value="1"/>
</dbReference>
<dbReference type="InterPro" id="IPR020568">
    <property type="entry name" value="Ribosomal_Su5_D2-typ_SF"/>
</dbReference>
<dbReference type="InterPro" id="IPR000754">
    <property type="entry name" value="Ribosomal_uS9"/>
</dbReference>
<dbReference type="InterPro" id="IPR023035">
    <property type="entry name" value="Ribosomal_uS9_bac/plastid"/>
</dbReference>
<dbReference type="InterPro" id="IPR020574">
    <property type="entry name" value="Ribosomal_uS9_CS"/>
</dbReference>
<dbReference type="InterPro" id="IPR014721">
    <property type="entry name" value="Ribsml_uS5_D2-typ_fold_subgr"/>
</dbReference>
<dbReference type="NCBIfam" id="NF001099">
    <property type="entry name" value="PRK00132.1"/>
    <property type="match status" value="1"/>
</dbReference>
<dbReference type="PANTHER" id="PTHR21569">
    <property type="entry name" value="RIBOSOMAL PROTEIN S9"/>
    <property type="match status" value="1"/>
</dbReference>
<dbReference type="PANTHER" id="PTHR21569:SF1">
    <property type="entry name" value="SMALL RIBOSOMAL SUBUNIT PROTEIN US9M"/>
    <property type="match status" value="1"/>
</dbReference>
<dbReference type="Pfam" id="PF00380">
    <property type="entry name" value="Ribosomal_S9"/>
    <property type="match status" value="1"/>
</dbReference>
<dbReference type="SUPFAM" id="SSF54211">
    <property type="entry name" value="Ribosomal protein S5 domain 2-like"/>
    <property type="match status" value="1"/>
</dbReference>
<dbReference type="PROSITE" id="PS00360">
    <property type="entry name" value="RIBOSOMAL_S9"/>
    <property type="match status" value="1"/>
</dbReference>
<feature type="chain" id="PRO_1000051313" description="Small ribosomal subunit protein uS9">
    <location>
        <begin position="1"/>
        <end position="130"/>
    </location>
</feature>
<name>RS9_SACD2</name>
<keyword id="KW-1185">Reference proteome</keyword>
<keyword id="KW-0687">Ribonucleoprotein</keyword>
<keyword id="KW-0689">Ribosomal protein</keyword>
<accession>Q21FV9</accession>
<reference key="1">
    <citation type="journal article" date="2008" name="PLoS Genet.">
        <title>Complete genome sequence of the complex carbohydrate-degrading marine bacterium, Saccharophagus degradans strain 2-40 T.</title>
        <authorList>
            <person name="Weiner R.M."/>
            <person name="Taylor L.E. II"/>
            <person name="Henrissat B."/>
            <person name="Hauser L."/>
            <person name="Land M."/>
            <person name="Coutinho P.M."/>
            <person name="Rancurel C."/>
            <person name="Saunders E.H."/>
            <person name="Longmire A.G."/>
            <person name="Zhang H."/>
            <person name="Bayer E.A."/>
            <person name="Gilbert H.J."/>
            <person name="Larimer F."/>
            <person name="Zhulin I.B."/>
            <person name="Ekborg N.A."/>
            <person name="Lamed R."/>
            <person name="Richardson P.M."/>
            <person name="Borovok I."/>
            <person name="Hutcheson S."/>
        </authorList>
    </citation>
    <scope>NUCLEOTIDE SEQUENCE [LARGE SCALE GENOMIC DNA]</scope>
    <source>
        <strain>2-40 / ATCC 43961 / DSM 17024</strain>
    </source>
</reference>
<sequence>MAAEQYYGTGRRKTSTARVFLTLGGGKITVNGKTLDEYFGREVARMIVRQPIELTDNVEKFDINVTVKGGGSFGQAGAIRHGLTRALMAYDEAMRPTLRAAGYVTRDAREVERKKVGLRKARKKPQFSKR</sequence>
<comment type="similarity">
    <text evidence="1">Belongs to the universal ribosomal protein uS9 family.</text>
</comment>
<proteinExistence type="inferred from homology"/>